<accession>Q6ERU3</accession>
<accession>Q0E262</accession>
<accession>Q7X9Y0</accession>
<proteinExistence type="evidence at transcript level"/>
<protein>
    <recommendedName>
        <fullName>Glutelin type-B 5</fullName>
    </recommendedName>
    <component>
        <recommendedName>
            <fullName>Glutelin type-B 5 acidic chain</fullName>
        </recommendedName>
    </component>
    <component>
        <recommendedName>
            <fullName>Glutelin type-B 5 basic chain</fullName>
        </recommendedName>
    </component>
</protein>
<organism>
    <name type="scientific">Oryza sativa subsp. japonica</name>
    <name type="common">Rice</name>
    <dbReference type="NCBI Taxonomy" id="39947"/>
    <lineage>
        <taxon>Eukaryota</taxon>
        <taxon>Viridiplantae</taxon>
        <taxon>Streptophyta</taxon>
        <taxon>Embryophyta</taxon>
        <taxon>Tracheophyta</taxon>
        <taxon>Spermatophyta</taxon>
        <taxon>Magnoliopsida</taxon>
        <taxon>Liliopsida</taxon>
        <taxon>Poales</taxon>
        <taxon>Poaceae</taxon>
        <taxon>BOP clade</taxon>
        <taxon>Oryzoideae</taxon>
        <taxon>Oryzeae</taxon>
        <taxon>Oryzinae</taxon>
        <taxon>Oryza</taxon>
        <taxon>Oryza sativa</taxon>
    </lineage>
</organism>
<name>GLUB5_ORYSJ</name>
<keyword id="KW-1015">Disulfide bond</keyword>
<keyword id="KW-1185">Reference proteome</keyword>
<keyword id="KW-0708">Seed storage protein</keyword>
<keyword id="KW-0732">Signal</keyword>
<keyword id="KW-0758">Storage protein</keyword>
<feature type="signal peptide" evidence="2">
    <location>
        <begin position="1"/>
        <end position="24"/>
    </location>
</feature>
<feature type="chain" id="PRO_0000240156" description="Glutelin type-B 5 acidic chain" evidence="1">
    <location>
        <begin position="25"/>
        <end position="303"/>
    </location>
</feature>
<feature type="chain" id="PRO_0000240157" description="Glutelin type-B 5 basic chain" evidence="1">
    <location>
        <begin position="304"/>
        <end position="500"/>
    </location>
</feature>
<feature type="domain" description="Cupin type-1 1" evidence="2">
    <location>
        <begin position="50"/>
        <end position="245"/>
    </location>
</feature>
<feature type="domain" description="Cupin type-1 2" evidence="2">
    <location>
        <begin position="316"/>
        <end position="465"/>
    </location>
</feature>
<feature type="disulfide bond" evidence="1">
    <location>
        <begin position="45"/>
        <end position="78"/>
    </location>
</feature>
<feature type="disulfide bond" description="Interchain (between acidic and basic chains)" evidence="2">
    <location>
        <begin position="121"/>
        <end position="310"/>
    </location>
</feature>
<gene>
    <name type="primary">GLUB5</name>
    <name type="synonym">GLUB-5</name>
    <name type="ordered locus">Os02g0268100</name>
    <name type="ordered locus">LOC_Os02g16820</name>
    <name type="ORF">P0693E08.14</name>
</gene>
<evidence type="ECO:0000250" key="1"/>
<evidence type="ECO:0000255" key="2"/>
<evidence type="ECO:0000305" key="3"/>
<dbReference type="EMBL" id="AP005428">
    <property type="protein sequence ID" value="BAD28627.1"/>
    <property type="molecule type" value="Genomic_DNA"/>
</dbReference>
<dbReference type="EMBL" id="AP008208">
    <property type="protein sequence ID" value="BAF08426.1"/>
    <property type="molecule type" value="Genomic_DNA"/>
</dbReference>
<dbReference type="EMBL" id="AP014958">
    <property type="protein sequence ID" value="BAS78035.1"/>
    <property type="molecule type" value="Genomic_DNA"/>
</dbReference>
<dbReference type="EMBL" id="AK107238">
    <property type="protein sequence ID" value="BAG98006.1"/>
    <property type="molecule type" value="mRNA"/>
</dbReference>
<dbReference type="EMBL" id="AK243000">
    <property type="protein sequence ID" value="BAH01401.1"/>
    <property type="molecule type" value="mRNA"/>
</dbReference>
<dbReference type="EMBL" id="AB093593">
    <property type="protein sequence ID" value="BAC77349.1"/>
    <property type="molecule type" value="Genomic_DNA"/>
</dbReference>
<dbReference type="RefSeq" id="XP_015626007.1">
    <property type="nucleotide sequence ID" value="XM_015770521.1"/>
</dbReference>
<dbReference type="SMR" id="Q6ERU3"/>
<dbReference type="FunCoup" id="Q6ERU3">
    <property type="interactions" value="2006"/>
</dbReference>
<dbReference type="STRING" id="39947.Q6ERU3"/>
<dbReference type="PaxDb" id="39947-Q6ERU3"/>
<dbReference type="EnsemblPlants" id="Os02t0268100-01">
    <property type="protein sequence ID" value="Os02t0268100-01"/>
    <property type="gene ID" value="Os02g0268100"/>
</dbReference>
<dbReference type="Gramene" id="Os02t0268100-01">
    <property type="protein sequence ID" value="Os02t0268100-01"/>
    <property type="gene ID" value="Os02g0268100"/>
</dbReference>
<dbReference type="KEGG" id="dosa:Os02g0268100"/>
<dbReference type="eggNOG" id="ENOG502QU1J">
    <property type="taxonomic scope" value="Eukaryota"/>
</dbReference>
<dbReference type="HOGENOM" id="CLU_026341_2_0_1"/>
<dbReference type="InParanoid" id="Q6ERU3"/>
<dbReference type="OMA" id="HESEDQQ"/>
<dbReference type="OrthoDB" id="2016041at2759"/>
<dbReference type="Proteomes" id="UP000000763">
    <property type="component" value="Chromosome 2"/>
</dbReference>
<dbReference type="Proteomes" id="UP000059680">
    <property type="component" value="Chromosome 2"/>
</dbReference>
<dbReference type="GO" id="GO:0045735">
    <property type="term" value="F:nutrient reservoir activity"/>
    <property type="evidence" value="ECO:0007669"/>
    <property type="project" value="UniProtKB-KW"/>
</dbReference>
<dbReference type="GO" id="GO:0048316">
    <property type="term" value="P:seed development"/>
    <property type="evidence" value="ECO:0007669"/>
    <property type="project" value="UniProtKB-ARBA"/>
</dbReference>
<dbReference type="CDD" id="cd02243">
    <property type="entry name" value="cupin_11S_legumin_C"/>
    <property type="match status" value="1"/>
</dbReference>
<dbReference type="CDD" id="cd02242">
    <property type="entry name" value="cupin_11S_legumin_N"/>
    <property type="match status" value="1"/>
</dbReference>
<dbReference type="FunFam" id="2.60.120.10:FF:000073">
    <property type="entry name" value="Glycinin G1"/>
    <property type="match status" value="1"/>
</dbReference>
<dbReference type="Gene3D" id="2.60.120.10">
    <property type="entry name" value="Jelly Rolls"/>
    <property type="match status" value="2"/>
</dbReference>
<dbReference type="InterPro" id="IPR022379">
    <property type="entry name" value="11S_seedstore_CS"/>
</dbReference>
<dbReference type="InterPro" id="IPR006044">
    <property type="entry name" value="11S_seedstore_pln"/>
</dbReference>
<dbReference type="InterPro" id="IPR006045">
    <property type="entry name" value="Cupin_1"/>
</dbReference>
<dbReference type="InterPro" id="IPR014710">
    <property type="entry name" value="RmlC-like_jellyroll"/>
</dbReference>
<dbReference type="InterPro" id="IPR011051">
    <property type="entry name" value="RmlC_Cupin_sf"/>
</dbReference>
<dbReference type="InterPro" id="IPR050253">
    <property type="entry name" value="Seed_Storage-Functional"/>
</dbReference>
<dbReference type="PANTHER" id="PTHR31189:SF35">
    <property type="entry name" value="12S SEED STORAGE PROTEIN CRB"/>
    <property type="match status" value="1"/>
</dbReference>
<dbReference type="PANTHER" id="PTHR31189">
    <property type="entry name" value="OS03G0336100 PROTEIN-RELATED"/>
    <property type="match status" value="1"/>
</dbReference>
<dbReference type="Pfam" id="PF00190">
    <property type="entry name" value="Cupin_1"/>
    <property type="match status" value="2"/>
</dbReference>
<dbReference type="PRINTS" id="PR00439">
    <property type="entry name" value="11SGLOBULIN"/>
</dbReference>
<dbReference type="SMART" id="SM00835">
    <property type="entry name" value="Cupin_1"/>
    <property type="match status" value="2"/>
</dbReference>
<dbReference type="SUPFAM" id="SSF51182">
    <property type="entry name" value="RmlC-like cupins"/>
    <property type="match status" value="1"/>
</dbReference>
<dbReference type="PROSITE" id="PS00305">
    <property type="entry name" value="11S_SEED_STORAGE"/>
    <property type="match status" value="1"/>
</dbReference>
<sequence length="500" mass="56808">MATIAFSRLSIYFCVLLLCHGSMAQLFGPNVNPWHNPRQGGFRECRFDRLQAFEPLRRVRSEAGVTEYFDEKNEQFQCTGTFVIRRVIEPQGLLVPRYSNTPGMVYIIQGRGSMGLTFPGCPATYQQQFQQFLPEGQSQSQKFRDEHQKIHQFRQGDIVALPAGVAHWFYNEGDAPVVALYVFDLNNNANQLEPRQKEFLLAGNNNREQQMYGRSIEQHSGQNIFSGFNNELLSEALGVNALVAKRLQGQNDQRGEIIRVKNGLKLLRPAFAQQQEQAQQQEQAQAQYQVQYSEEQQPSTRCNGLDENFCTIKARLNIENPSHADTYNPRAGRITRLNSQKFPILNLVQLSATRVNLYQNAILSPFWNVNAHSLVYIVQGHARVQVVSNLGKTVFNGVLRPGQLLIIPQHYVVLKKAEHEGCQYISFKTNANSMVSHLAGKNSIFRAMPVDVIANAYRISREQARSLKNNRGEELGAFTPRYQQQTYLGFSNESENEASE</sequence>
<comment type="function">
    <text>Seed storage protein.</text>
</comment>
<comment type="subunit">
    <text evidence="1">Hexamer; each subunit is composed of an acidic and a basic chain derived from a single precursor and linked by a disulfide bond.</text>
</comment>
<comment type="similarity">
    <text evidence="3">Belongs to the 11S seed storage protein (globulins) family.</text>
</comment>
<reference key="1">
    <citation type="journal article" date="2005" name="Nature">
        <title>The map-based sequence of the rice genome.</title>
        <authorList>
            <consortium name="International rice genome sequencing project (IRGSP)"/>
        </authorList>
    </citation>
    <scope>NUCLEOTIDE SEQUENCE [LARGE SCALE GENOMIC DNA]</scope>
    <source>
        <strain>cv. Nipponbare</strain>
    </source>
</reference>
<reference key="2">
    <citation type="journal article" date="2008" name="Nucleic Acids Res.">
        <title>The rice annotation project database (RAP-DB): 2008 update.</title>
        <authorList>
            <consortium name="The rice annotation project (RAP)"/>
        </authorList>
    </citation>
    <scope>GENOME REANNOTATION</scope>
    <source>
        <strain>cv. Nipponbare</strain>
    </source>
</reference>
<reference key="3">
    <citation type="journal article" date="2013" name="Rice">
        <title>Improvement of the Oryza sativa Nipponbare reference genome using next generation sequence and optical map data.</title>
        <authorList>
            <person name="Kawahara Y."/>
            <person name="de la Bastide M."/>
            <person name="Hamilton J.P."/>
            <person name="Kanamori H."/>
            <person name="McCombie W.R."/>
            <person name="Ouyang S."/>
            <person name="Schwartz D.C."/>
            <person name="Tanaka T."/>
            <person name="Wu J."/>
            <person name="Zhou S."/>
            <person name="Childs K.L."/>
            <person name="Davidson R.M."/>
            <person name="Lin H."/>
            <person name="Quesada-Ocampo L."/>
            <person name="Vaillancourt B."/>
            <person name="Sakai H."/>
            <person name="Lee S.S."/>
            <person name="Kim J."/>
            <person name="Numa H."/>
            <person name="Itoh T."/>
            <person name="Buell C.R."/>
            <person name="Matsumoto T."/>
        </authorList>
    </citation>
    <scope>GENOME REANNOTATION</scope>
    <source>
        <strain>cv. Nipponbare</strain>
    </source>
</reference>
<reference key="4">
    <citation type="journal article" date="2003" name="Science">
        <title>Collection, mapping, and annotation of over 28,000 cDNA clones from japonica rice.</title>
        <authorList>
            <consortium name="The rice full-length cDNA consortium"/>
        </authorList>
    </citation>
    <scope>NUCLEOTIDE SEQUENCE [LARGE SCALE MRNA]</scope>
    <source>
        <strain>cv. Nipponbare</strain>
    </source>
</reference>
<reference key="5">
    <citation type="submission" date="2006-10" db="EMBL/GenBank/DDBJ databases">
        <title>Oryza sativa full length cDNA.</title>
        <authorList>
            <consortium name="The rice full-length cDNA consortium"/>
        </authorList>
    </citation>
    <scope>NUCLEOTIDE SEQUENCE [LARGE SCALE MRNA]</scope>
    <source>
        <strain>cv. Nipponbare</strain>
    </source>
</reference>
<reference key="6">
    <citation type="journal article" date="2003" name="Plant Cell">
        <title>Low glutelin content1: a dominant mutation that suppresses the glutelin multigene family via RNA silencing in rice.</title>
        <authorList>
            <person name="Kusaba M."/>
            <person name="Miyahara K."/>
            <person name="Iida S."/>
            <person name="Fukuoka H."/>
            <person name="Takano T."/>
            <person name="Sassa H."/>
            <person name="Nishimura M."/>
            <person name="Nishio T."/>
        </authorList>
    </citation>
    <scope>NUCLEOTIDE SEQUENCE [GENOMIC DNA] OF 1-312</scope>
</reference>